<name>C3H53_ARATH</name>
<reference key="1">
    <citation type="journal article" date="1998" name="DNA Res.">
        <title>Structural analysis of Arabidopsis thaliana chromosome 5. V. Sequence features of the regions of 1,381,565 bp covered by twenty one physically assigned P1 and TAC clones.</title>
        <authorList>
            <person name="Kaneko T."/>
            <person name="Kotani H."/>
            <person name="Nakamura Y."/>
            <person name="Sato S."/>
            <person name="Asamizu E."/>
            <person name="Miyajima N."/>
            <person name="Tabata S."/>
        </authorList>
    </citation>
    <scope>NUCLEOTIDE SEQUENCE [LARGE SCALE GENOMIC DNA]</scope>
    <source>
        <strain>cv. Columbia</strain>
    </source>
</reference>
<reference key="2">
    <citation type="journal article" date="2017" name="Plant J.">
        <title>Araport11: a complete reannotation of the Arabidopsis thaliana reference genome.</title>
        <authorList>
            <person name="Cheng C.Y."/>
            <person name="Krishnakumar V."/>
            <person name="Chan A.P."/>
            <person name="Thibaud-Nissen F."/>
            <person name="Schobel S."/>
            <person name="Town C.D."/>
        </authorList>
    </citation>
    <scope>GENOME REANNOTATION</scope>
    <source>
        <strain>cv. Columbia</strain>
    </source>
</reference>
<reference key="3">
    <citation type="journal article" date="2006" name="Plant Biotechnol. J.">
        <title>Simultaneous high-throughput recombinational cloning of open reading frames in closed and open configurations.</title>
        <authorList>
            <person name="Underwood B.A."/>
            <person name="Vanderhaeghen R."/>
            <person name="Whitford R."/>
            <person name="Town C.D."/>
            <person name="Hilson P."/>
        </authorList>
    </citation>
    <scope>NUCLEOTIDE SEQUENCE [LARGE SCALE MRNA]</scope>
    <source>
        <strain>cv. Columbia</strain>
    </source>
</reference>
<reference key="4">
    <citation type="journal article" date="2008" name="BMC Genomics">
        <title>Genome-wide analysis of CCCH zinc finger family in Arabidopsis and rice.</title>
        <authorList>
            <person name="Wang D."/>
            <person name="Guo Y."/>
            <person name="Wu C."/>
            <person name="Yang G."/>
            <person name="Li Y."/>
            <person name="Zheng C."/>
        </authorList>
    </citation>
    <scope>NOMENCLATURE</scope>
</reference>
<evidence type="ECO:0000255" key="1">
    <source>
        <dbReference type="PROSITE-ProRule" id="PRU00723"/>
    </source>
</evidence>
<evidence type="ECO:0000256" key="2">
    <source>
        <dbReference type="SAM" id="MobiDB-lite"/>
    </source>
</evidence>
<evidence type="ECO:0000305" key="3"/>
<gene>
    <name type="ordered locus">At5g07060</name>
    <name type="ORF">MOJ9.23</name>
</gene>
<organism>
    <name type="scientific">Arabidopsis thaliana</name>
    <name type="common">Mouse-ear cress</name>
    <dbReference type="NCBI Taxonomy" id="3702"/>
    <lineage>
        <taxon>Eukaryota</taxon>
        <taxon>Viridiplantae</taxon>
        <taxon>Streptophyta</taxon>
        <taxon>Embryophyta</taxon>
        <taxon>Tracheophyta</taxon>
        <taxon>Spermatophyta</taxon>
        <taxon>Magnoliopsida</taxon>
        <taxon>eudicotyledons</taxon>
        <taxon>Gunneridae</taxon>
        <taxon>Pentapetalae</taxon>
        <taxon>rosids</taxon>
        <taxon>malvids</taxon>
        <taxon>Brassicales</taxon>
        <taxon>Brassicaceae</taxon>
        <taxon>Camelineae</taxon>
        <taxon>Arabidopsis</taxon>
    </lineage>
</organism>
<accession>Q9FL40</accession>
<accession>A0MFE0</accession>
<feature type="chain" id="PRO_0000372006" description="Zinc finger CCCH domain-containing protein 53">
    <location>
        <begin position="1"/>
        <end position="363"/>
    </location>
</feature>
<feature type="domain" description="RRM">
    <location>
        <begin position="225"/>
        <end position="310"/>
    </location>
</feature>
<feature type="zinc finger region" description="C3H1-type" evidence="1">
    <location>
        <begin position="154"/>
        <end position="181"/>
    </location>
</feature>
<feature type="region of interest" description="Disordered" evidence="2">
    <location>
        <begin position="281"/>
        <end position="348"/>
    </location>
</feature>
<feature type="compositionally biased region" description="Low complexity" evidence="2">
    <location>
        <begin position="283"/>
        <end position="297"/>
    </location>
</feature>
<feature type="compositionally biased region" description="Polar residues" evidence="2">
    <location>
        <begin position="320"/>
        <end position="336"/>
    </location>
</feature>
<proteinExistence type="evidence at transcript level"/>
<keyword id="KW-0025">Alternative splicing</keyword>
<keyword id="KW-0238">DNA-binding</keyword>
<keyword id="KW-0479">Metal-binding</keyword>
<keyword id="KW-1185">Reference proteome</keyword>
<keyword id="KW-0694">RNA-binding</keyword>
<keyword id="KW-0862">Zinc</keyword>
<keyword id="KW-0863">Zinc-finger</keyword>
<comment type="alternative products">
    <event type="alternative splicing"/>
    <isoform>
        <id>Q9FL40-1</id>
        <name>1</name>
        <sequence type="displayed"/>
    </isoform>
    <text>A number of isoforms are produced. According to EST sequences.</text>
</comment>
<comment type="sequence caution" evidence="3">
    <conflict type="erroneous termination">
        <sequence resource="EMBL-CDS" id="ABK28682"/>
    </conflict>
    <text>Extended C-terminus.</text>
</comment>
<protein>
    <recommendedName>
        <fullName>Zinc finger CCCH domain-containing protein 53</fullName>
        <shortName>AtC3H53</shortName>
    </recommendedName>
</protein>
<dbReference type="EMBL" id="AB010697">
    <property type="protein sequence ID" value="BAB11164.1"/>
    <property type="molecule type" value="Genomic_DNA"/>
</dbReference>
<dbReference type="EMBL" id="CP002688">
    <property type="protein sequence ID" value="AED91103.1"/>
    <property type="molecule type" value="Genomic_DNA"/>
</dbReference>
<dbReference type="EMBL" id="DQ446923">
    <property type="protein sequence ID" value="ABE66134.1"/>
    <property type="molecule type" value="mRNA"/>
</dbReference>
<dbReference type="EMBL" id="DQ653266">
    <property type="protein sequence ID" value="ABK28682.1"/>
    <property type="status" value="ALT_SEQ"/>
    <property type="molecule type" value="mRNA"/>
</dbReference>
<dbReference type="RefSeq" id="NP_196323.1">
    <molecule id="Q9FL40-1"/>
    <property type="nucleotide sequence ID" value="NM_120788.2"/>
</dbReference>
<dbReference type="SMR" id="Q9FL40"/>
<dbReference type="BioGRID" id="15876">
    <property type="interactions" value="1"/>
</dbReference>
<dbReference type="FunCoup" id="Q9FL40">
    <property type="interactions" value="3933"/>
</dbReference>
<dbReference type="IntAct" id="Q9FL40">
    <property type="interactions" value="1"/>
</dbReference>
<dbReference type="STRING" id="3702.Q9FL40"/>
<dbReference type="GlyGen" id="Q9FL40">
    <property type="glycosylation" value="1 site"/>
</dbReference>
<dbReference type="PaxDb" id="3702-AT5G07060.1"/>
<dbReference type="EnsemblPlants" id="AT5G07060.1">
    <molecule id="Q9FL40-1"/>
    <property type="protein sequence ID" value="AT5G07060.1"/>
    <property type="gene ID" value="AT5G07060"/>
</dbReference>
<dbReference type="GeneID" id="830597"/>
<dbReference type="Gramene" id="AT5G07060.1">
    <molecule id="Q9FL40-1"/>
    <property type="protein sequence ID" value="AT5G07060.1"/>
    <property type="gene ID" value="AT5G07060"/>
</dbReference>
<dbReference type="KEGG" id="ath:AT5G07060"/>
<dbReference type="Araport" id="AT5G07060"/>
<dbReference type="TAIR" id="AT5G07060">
    <property type="gene designation" value="MAC5C"/>
</dbReference>
<dbReference type="eggNOG" id="KOG0153">
    <property type="taxonomic scope" value="Eukaryota"/>
</dbReference>
<dbReference type="HOGENOM" id="CLU_027112_2_0_1"/>
<dbReference type="InParanoid" id="Q9FL40"/>
<dbReference type="PhylomeDB" id="Q9FL40"/>
<dbReference type="PRO" id="PR:Q9FL40"/>
<dbReference type="Proteomes" id="UP000006548">
    <property type="component" value="Chromosome 5"/>
</dbReference>
<dbReference type="ExpressionAtlas" id="Q9FL40">
    <property type="expression patterns" value="baseline and differential"/>
</dbReference>
<dbReference type="GO" id="GO:0003723">
    <property type="term" value="F:RNA binding"/>
    <property type="evidence" value="ECO:0007669"/>
    <property type="project" value="UniProtKB-KW"/>
</dbReference>
<dbReference type="GO" id="GO:0000976">
    <property type="term" value="F:transcription cis-regulatory region binding"/>
    <property type="evidence" value="ECO:0000353"/>
    <property type="project" value="TAIR"/>
</dbReference>
<dbReference type="GO" id="GO:0008270">
    <property type="term" value="F:zinc ion binding"/>
    <property type="evidence" value="ECO:0007669"/>
    <property type="project" value="UniProtKB-KW"/>
</dbReference>
<dbReference type="Gene3D" id="3.30.70.330">
    <property type="match status" value="1"/>
</dbReference>
<dbReference type="Gene3D" id="4.10.1000.10">
    <property type="entry name" value="Zinc finger, CCCH-type"/>
    <property type="match status" value="1"/>
</dbReference>
<dbReference type="InterPro" id="IPR039171">
    <property type="entry name" value="Cwc2/Slt11"/>
</dbReference>
<dbReference type="InterPro" id="IPR012677">
    <property type="entry name" value="Nucleotide-bd_a/b_plait_sf"/>
</dbReference>
<dbReference type="InterPro" id="IPR035979">
    <property type="entry name" value="RBD_domain_sf"/>
</dbReference>
<dbReference type="InterPro" id="IPR000504">
    <property type="entry name" value="RRM_dom"/>
</dbReference>
<dbReference type="InterPro" id="IPR048995">
    <property type="entry name" value="STL11/RBM22-like_N"/>
</dbReference>
<dbReference type="InterPro" id="IPR000571">
    <property type="entry name" value="Znf_CCCH"/>
</dbReference>
<dbReference type="InterPro" id="IPR036855">
    <property type="entry name" value="Znf_CCCH_sf"/>
</dbReference>
<dbReference type="PANTHER" id="PTHR14089">
    <property type="entry name" value="PRE-MRNA-SPLICING FACTOR RBM22"/>
    <property type="match status" value="1"/>
</dbReference>
<dbReference type="PANTHER" id="PTHR14089:SF12">
    <property type="entry name" value="ZINC FINGER CCCH DOMAIN-CONTAINING PROTEIN 4-RELATED"/>
    <property type="match status" value="1"/>
</dbReference>
<dbReference type="Pfam" id="PF00076">
    <property type="entry name" value="RRM_1"/>
    <property type="match status" value="1"/>
</dbReference>
<dbReference type="Pfam" id="PF21369">
    <property type="entry name" value="STL11_N"/>
    <property type="match status" value="1"/>
</dbReference>
<dbReference type="SMART" id="SM00356">
    <property type="entry name" value="ZnF_C3H1"/>
    <property type="match status" value="1"/>
</dbReference>
<dbReference type="SUPFAM" id="SSF90229">
    <property type="entry name" value="CCCH zinc finger"/>
    <property type="match status" value="1"/>
</dbReference>
<dbReference type="SUPFAM" id="SSF54928">
    <property type="entry name" value="RNA-binding domain, RBD"/>
    <property type="match status" value="1"/>
</dbReference>
<dbReference type="PROSITE" id="PS50103">
    <property type="entry name" value="ZF_C3H1"/>
    <property type="match status" value="1"/>
</dbReference>
<sequence>MSHRDHGADGWESADFPITCESCFGDNPYMRMTRADYDKECKICSRPFTAFRWRPGRNARFKKTEICQTCSKLKNVCQVCLLDLGFGLPVQVRDSALNINSHYSVPMSHVNREYFADEHDPKTRAGLDYESSFGKMQPNDTILKLQRRTPSYEKNRPKICSFYTIGQCKRGAECSFRHEMPETGELSHQNIRDRYYSVNDPVAMKLLRKAGEMGTLEPPEDESIKTLYVGGLNSRIFEQDIHDHFYAYGEMESIRVMAEDGKYDQSGSNQQQQGSIAHTGLISQQQNQHSQMQQYYMQPPPPNEYSHYPSMDTQRMGAAFSTQESDGSSTSENNRAYSSYSYPMPPHQPYPTPPPYIDIYIYI</sequence>